<gene>
    <name evidence="1" type="primary">thiE</name>
    <name type="ordered locus">CLB_0490</name>
</gene>
<reference key="1">
    <citation type="journal article" date="2007" name="PLoS ONE">
        <title>Analysis of the neurotoxin complex genes in Clostridium botulinum A1-A4 and B1 strains: BoNT/A3, /Ba4 and /B1 clusters are located within plasmids.</title>
        <authorList>
            <person name="Smith T.J."/>
            <person name="Hill K.K."/>
            <person name="Foley B.T."/>
            <person name="Detter J.C."/>
            <person name="Munk A.C."/>
            <person name="Bruce D.C."/>
            <person name="Doggett N.A."/>
            <person name="Smith L.A."/>
            <person name="Marks J.D."/>
            <person name="Xie G."/>
            <person name="Brettin T.S."/>
        </authorList>
    </citation>
    <scope>NUCLEOTIDE SEQUENCE [LARGE SCALE GENOMIC DNA]</scope>
    <source>
        <strain>ATCC 19397 / Type A</strain>
    </source>
</reference>
<accession>A7FPT0</accession>
<proteinExistence type="inferred from homology"/>
<name>THIE_CLOB1</name>
<protein>
    <recommendedName>
        <fullName evidence="1">Thiamine-phosphate synthase</fullName>
        <shortName evidence="1">TP synthase</shortName>
        <shortName evidence="1">TPS</shortName>
        <ecNumber evidence="1">2.5.1.3</ecNumber>
    </recommendedName>
    <alternativeName>
        <fullName evidence="1">Thiamine-phosphate pyrophosphorylase</fullName>
        <shortName evidence="1">TMP pyrophosphorylase</shortName>
        <shortName evidence="1">TMP-PPase</shortName>
    </alternativeName>
</protein>
<dbReference type="EC" id="2.5.1.3" evidence="1"/>
<dbReference type="EMBL" id="CP000726">
    <property type="protein sequence ID" value="ABS33773.1"/>
    <property type="molecule type" value="Genomic_DNA"/>
</dbReference>
<dbReference type="RefSeq" id="WP_011948211.1">
    <property type="nucleotide sequence ID" value="NC_009697.1"/>
</dbReference>
<dbReference type="SMR" id="A7FPT0"/>
<dbReference type="GeneID" id="5184704"/>
<dbReference type="KEGG" id="cba:CLB_0490"/>
<dbReference type="HOGENOM" id="CLU_018272_3_2_9"/>
<dbReference type="UniPathway" id="UPA00060">
    <property type="reaction ID" value="UER00141"/>
</dbReference>
<dbReference type="GO" id="GO:0005737">
    <property type="term" value="C:cytoplasm"/>
    <property type="evidence" value="ECO:0007669"/>
    <property type="project" value="TreeGrafter"/>
</dbReference>
<dbReference type="GO" id="GO:0000287">
    <property type="term" value="F:magnesium ion binding"/>
    <property type="evidence" value="ECO:0007669"/>
    <property type="project" value="UniProtKB-UniRule"/>
</dbReference>
<dbReference type="GO" id="GO:0004789">
    <property type="term" value="F:thiamine-phosphate diphosphorylase activity"/>
    <property type="evidence" value="ECO:0007669"/>
    <property type="project" value="UniProtKB-UniRule"/>
</dbReference>
<dbReference type="GO" id="GO:0009228">
    <property type="term" value="P:thiamine biosynthetic process"/>
    <property type="evidence" value="ECO:0007669"/>
    <property type="project" value="UniProtKB-KW"/>
</dbReference>
<dbReference type="GO" id="GO:0009229">
    <property type="term" value="P:thiamine diphosphate biosynthetic process"/>
    <property type="evidence" value="ECO:0007669"/>
    <property type="project" value="UniProtKB-UniRule"/>
</dbReference>
<dbReference type="CDD" id="cd00564">
    <property type="entry name" value="TMP_TenI"/>
    <property type="match status" value="1"/>
</dbReference>
<dbReference type="FunFam" id="3.20.20.70:FF:000282">
    <property type="entry name" value="Thiamine-phosphate synthase"/>
    <property type="match status" value="1"/>
</dbReference>
<dbReference type="Gene3D" id="3.20.20.70">
    <property type="entry name" value="Aldolase class I"/>
    <property type="match status" value="1"/>
</dbReference>
<dbReference type="HAMAP" id="MF_00097">
    <property type="entry name" value="TMP_synthase"/>
    <property type="match status" value="1"/>
</dbReference>
<dbReference type="InterPro" id="IPR013785">
    <property type="entry name" value="Aldolase_TIM"/>
</dbReference>
<dbReference type="InterPro" id="IPR036206">
    <property type="entry name" value="ThiamineP_synth_sf"/>
</dbReference>
<dbReference type="InterPro" id="IPR022998">
    <property type="entry name" value="ThiamineP_synth_TenI"/>
</dbReference>
<dbReference type="InterPro" id="IPR034291">
    <property type="entry name" value="TMP_synthase"/>
</dbReference>
<dbReference type="NCBIfam" id="TIGR00693">
    <property type="entry name" value="thiE"/>
    <property type="match status" value="1"/>
</dbReference>
<dbReference type="PANTHER" id="PTHR20857:SF23">
    <property type="entry name" value="THIAMINE BIOSYNTHETIC BIFUNCTIONAL ENZYME"/>
    <property type="match status" value="1"/>
</dbReference>
<dbReference type="PANTHER" id="PTHR20857">
    <property type="entry name" value="THIAMINE-PHOSPHATE PYROPHOSPHORYLASE"/>
    <property type="match status" value="1"/>
</dbReference>
<dbReference type="Pfam" id="PF02581">
    <property type="entry name" value="TMP-TENI"/>
    <property type="match status" value="1"/>
</dbReference>
<dbReference type="SUPFAM" id="SSF51391">
    <property type="entry name" value="Thiamin phosphate synthase"/>
    <property type="match status" value="1"/>
</dbReference>
<sequence length="205" mass="22406">MEINYELYLITDRRFLKGRQLKKVVEDAILGGVTIVQVREKDVSTREFYNVAKEVKEVTDYYKVPIIINDRLDIAQAIDASGVHLGQKDMHLNIAREILGKDKIIGISVGNVKEALQAQNNGADYLGIGTIFPTGSKKDVDAIIGIDGLSKIKDSISIPSVAIGGINKTNFKDVLKTGIEGISVISAILDEDDIKLAANNLLINK</sequence>
<keyword id="KW-0460">Magnesium</keyword>
<keyword id="KW-0479">Metal-binding</keyword>
<keyword id="KW-0784">Thiamine biosynthesis</keyword>
<keyword id="KW-0808">Transferase</keyword>
<feature type="chain" id="PRO_0000336381" description="Thiamine-phosphate synthase">
    <location>
        <begin position="1"/>
        <end position="205"/>
    </location>
</feature>
<feature type="binding site" evidence="1">
    <location>
        <begin position="37"/>
        <end position="41"/>
    </location>
    <ligand>
        <name>4-amino-2-methyl-5-(diphosphooxymethyl)pyrimidine</name>
        <dbReference type="ChEBI" id="CHEBI:57841"/>
    </ligand>
</feature>
<feature type="binding site" evidence="1">
    <location>
        <position position="69"/>
    </location>
    <ligand>
        <name>4-amino-2-methyl-5-(diphosphooxymethyl)pyrimidine</name>
        <dbReference type="ChEBI" id="CHEBI:57841"/>
    </ligand>
</feature>
<feature type="binding site" evidence="1">
    <location>
        <position position="70"/>
    </location>
    <ligand>
        <name>Mg(2+)</name>
        <dbReference type="ChEBI" id="CHEBI:18420"/>
    </ligand>
</feature>
<feature type="binding site" evidence="1">
    <location>
        <position position="89"/>
    </location>
    <ligand>
        <name>Mg(2+)</name>
        <dbReference type="ChEBI" id="CHEBI:18420"/>
    </ligand>
</feature>
<feature type="binding site" evidence="1">
    <location>
        <position position="108"/>
    </location>
    <ligand>
        <name>4-amino-2-methyl-5-(diphosphooxymethyl)pyrimidine</name>
        <dbReference type="ChEBI" id="CHEBI:57841"/>
    </ligand>
</feature>
<feature type="binding site" evidence="1">
    <location>
        <begin position="134"/>
        <end position="136"/>
    </location>
    <ligand>
        <name>2-[(2R,5Z)-2-carboxy-4-methylthiazol-5(2H)-ylidene]ethyl phosphate</name>
        <dbReference type="ChEBI" id="CHEBI:62899"/>
    </ligand>
</feature>
<feature type="binding site" evidence="1">
    <location>
        <position position="137"/>
    </location>
    <ligand>
        <name>4-amino-2-methyl-5-(diphosphooxymethyl)pyrimidine</name>
        <dbReference type="ChEBI" id="CHEBI:57841"/>
    </ligand>
</feature>
<feature type="binding site" evidence="1">
    <location>
        <position position="165"/>
    </location>
    <ligand>
        <name>2-[(2R,5Z)-2-carboxy-4-methylthiazol-5(2H)-ylidene]ethyl phosphate</name>
        <dbReference type="ChEBI" id="CHEBI:62899"/>
    </ligand>
</feature>
<feature type="binding site" evidence="1">
    <location>
        <begin position="185"/>
        <end position="186"/>
    </location>
    <ligand>
        <name>2-[(2R,5Z)-2-carboxy-4-methylthiazol-5(2H)-ylidene]ethyl phosphate</name>
        <dbReference type="ChEBI" id="CHEBI:62899"/>
    </ligand>
</feature>
<evidence type="ECO:0000255" key="1">
    <source>
        <dbReference type="HAMAP-Rule" id="MF_00097"/>
    </source>
</evidence>
<comment type="function">
    <text evidence="1">Condenses 4-methyl-5-(beta-hydroxyethyl)thiazole monophosphate (THZ-P) and 2-methyl-4-amino-5-hydroxymethyl pyrimidine pyrophosphate (HMP-PP) to form thiamine monophosphate (TMP).</text>
</comment>
<comment type="catalytic activity">
    <reaction evidence="1">
        <text>2-[(2R,5Z)-2-carboxy-4-methylthiazol-5(2H)-ylidene]ethyl phosphate + 4-amino-2-methyl-5-(diphosphooxymethyl)pyrimidine + 2 H(+) = thiamine phosphate + CO2 + diphosphate</text>
        <dbReference type="Rhea" id="RHEA:47844"/>
        <dbReference type="ChEBI" id="CHEBI:15378"/>
        <dbReference type="ChEBI" id="CHEBI:16526"/>
        <dbReference type="ChEBI" id="CHEBI:33019"/>
        <dbReference type="ChEBI" id="CHEBI:37575"/>
        <dbReference type="ChEBI" id="CHEBI:57841"/>
        <dbReference type="ChEBI" id="CHEBI:62899"/>
        <dbReference type="EC" id="2.5.1.3"/>
    </reaction>
</comment>
<comment type="catalytic activity">
    <reaction evidence="1">
        <text>2-(2-carboxy-4-methylthiazol-5-yl)ethyl phosphate + 4-amino-2-methyl-5-(diphosphooxymethyl)pyrimidine + 2 H(+) = thiamine phosphate + CO2 + diphosphate</text>
        <dbReference type="Rhea" id="RHEA:47848"/>
        <dbReference type="ChEBI" id="CHEBI:15378"/>
        <dbReference type="ChEBI" id="CHEBI:16526"/>
        <dbReference type="ChEBI" id="CHEBI:33019"/>
        <dbReference type="ChEBI" id="CHEBI:37575"/>
        <dbReference type="ChEBI" id="CHEBI:57841"/>
        <dbReference type="ChEBI" id="CHEBI:62890"/>
        <dbReference type="EC" id="2.5.1.3"/>
    </reaction>
</comment>
<comment type="catalytic activity">
    <reaction evidence="1">
        <text>4-methyl-5-(2-phosphooxyethyl)-thiazole + 4-amino-2-methyl-5-(diphosphooxymethyl)pyrimidine + H(+) = thiamine phosphate + diphosphate</text>
        <dbReference type="Rhea" id="RHEA:22328"/>
        <dbReference type="ChEBI" id="CHEBI:15378"/>
        <dbReference type="ChEBI" id="CHEBI:33019"/>
        <dbReference type="ChEBI" id="CHEBI:37575"/>
        <dbReference type="ChEBI" id="CHEBI:57841"/>
        <dbReference type="ChEBI" id="CHEBI:58296"/>
        <dbReference type="EC" id="2.5.1.3"/>
    </reaction>
</comment>
<comment type="cofactor">
    <cofactor evidence="1">
        <name>Mg(2+)</name>
        <dbReference type="ChEBI" id="CHEBI:18420"/>
    </cofactor>
    <text evidence="1">Binds 1 Mg(2+) ion per subunit.</text>
</comment>
<comment type="pathway">
    <text evidence="1">Cofactor biosynthesis; thiamine diphosphate biosynthesis; thiamine phosphate from 4-amino-2-methyl-5-diphosphomethylpyrimidine and 4-methyl-5-(2-phosphoethyl)-thiazole: step 1/1.</text>
</comment>
<comment type="similarity">
    <text evidence="1">Belongs to the thiamine-phosphate synthase family.</text>
</comment>
<organism>
    <name type="scientific">Clostridium botulinum (strain ATCC 19397 / Type A)</name>
    <dbReference type="NCBI Taxonomy" id="441770"/>
    <lineage>
        <taxon>Bacteria</taxon>
        <taxon>Bacillati</taxon>
        <taxon>Bacillota</taxon>
        <taxon>Clostridia</taxon>
        <taxon>Eubacteriales</taxon>
        <taxon>Clostridiaceae</taxon>
        <taxon>Clostridium</taxon>
    </lineage>
</organism>